<protein>
    <recommendedName>
        <fullName>Putative transport protein YrrI</fullName>
    </recommendedName>
</protein>
<name>YRRI_BACSU</name>
<reference key="1">
    <citation type="journal article" date="1997" name="Nature">
        <title>The complete genome sequence of the Gram-positive bacterium Bacillus subtilis.</title>
        <authorList>
            <person name="Kunst F."/>
            <person name="Ogasawara N."/>
            <person name="Moszer I."/>
            <person name="Albertini A.M."/>
            <person name="Alloni G."/>
            <person name="Azevedo V."/>
            <person name="Bertero M.G."/>
            <person name="Bessieres P."/>
            <person name="Bolotin A."/>
            <person name="Borchert S."/>
            <person name="Borriss R."/>
            <person name="Boursier L."/>
            <person name="Brans A."/>
            <person name="Braun M."/>
            <person name="Brignell S.C."/>
            <person name="Bron S."/>
            <person name="Brouillet S."/>
            <person name="Bruschi C.V."/>
            <person name="Caldwell B."/>
            <person name="Capuano V."/>
            <person name="Carter N.M."/>
            <person name="Choi S.-K."/>
            <person name="Codani J.-J."/>
            <person name="Connerton I.F."/>
            <person name="Cummings N.J."/>
            <person name="Daniel R.A."/>
            <person name="Denizot F."/>
            <person name="Devine K.M."/>
            <person name="Duesterhoeft A."/>
            <person name="Ehrlich S.D."/>
            <person name="Emmerson P.T."/>
            <person name="Entian K.-D."/>
            <person name="Errington J."/>
            <person name="Fabret C."/>
            <person name="Ferrari E."/>
            <person name="Foulger D."/>
            <person name="Fritz C."/>
            <person name="Fujita M."/>
            <person name="Fujita Y."/>
            <person name="Fuma S."/>
            <person name="Galizzi A."/>
            <person name="Galleron N."/>
            <person name="Ghim S.-Y."/>
            <person name="Glaser P."/>
            <person name="Goffeau A."/>
            <person name="Golightly E.J."/>
            <person name="Grandi G."/>
            <person name="Guiseppi G."/>
            <person name="Guy B.J."/>
            <person name="Haga K."/>
            <person name="Haiech J."/>
            <person name="Harwood C.R."/>
            <person name="Henaut A."/>
            <person name="Hilbert H."/>
            <person name="Holsappel S."/>
            <person name="Hosono S."/>
            <person name="Hullo M.-F."/>
            <person name="Itaya M."/>
            <person name="Jones L.-M."/>
            <person name="Joris B."/>
            <person name="Karamata D."/>
            <person name="Kasahara Y."/>
            <person name="Klaerr-Blanchard M."/>
            <person name="Klein C."/>
            <person name="Kobayashi Y."/>
            <person name="Koetter P."/>
            <person name="Koningstein G."/>
            <person name="Krogh S."/>
            <person name="Kumano M."/>
            <person name="Kurita K."/>
            <person name="Lapidus A."/>
            <person name="Lardinois S."/>
            <person name="Lauber J."/>
            <person name="Lazarevic V."/>
            <person name="Lee S.-M."/>
            <person name="Levine A."/>
            <person name="Liu H."/>
            <person name="Masuda S."/>
            <person name="Mauel C."/>
            <person name="Medigue C."/>
            <person name="Medina N."/>
            <person name="Mellado R.P."/>
            <person name="Mizuno M."/>
            <person name="Moestl D."/>
            <person name="Nakai S."/>
            <person name="Noback M."/>
            <person name="Noone D."/>
            <person name="O'Reilly M."/>
            <person name="Ogawa K."/>
            <person name="Ogiwara A."/>
            <person name="Oudega B."/>
            <person name="Park S.-H."/>
            <person name="Parro V."/>
            <person name="Pohl T.M."/>
            <person name="Portetelle D."/>
            <person name="Porwollik S."/>
            <person name="Prescott A.M."/>
            <person name="Presecan E."/>
            <person name="Pujic P."/>
            <person name="Purnelle B."/>
            <person name="Rapoport G."/>
            <person name="Rey M."/>
            <person name="Reynolds S."/>
            <person name="Rieger M."/>
            <person name="Rivolta C."/>
            <person name="Rocha E."/>
            <person name="Roche B."/>
            <person name="Rose M."/>
            <person name="Sadaie Y."/>
            <person name="Sato T."/>
            <person name="Scanlan E."/>
            <person name="Schleich S."/>
            <person name="Schroeter R."/>
            <person name="Scoffone F."/>
            <person name="Sekiguchi J."/>
            <person name="Sekowska A."/>
            <person name="Seror S.J."/>
            <person name="Serror P."/>
            <person name="Shin B.-S."/>
            <person name="Soldo B."/>
            <person name="Sorokin A."/>
            <person name="Tacconi E."/>
            <person name="Takagi T."/>
            <person name="Takahashi H."/>
            <person name="Takemaru K."/>
            <person name="Takeuchi M."/>
            <person name="Tamakoshi A."/>
            <person name="Tanaka T."/>
            <person name="Terpstra P."/>
            <person name="Tognoni A."/>
            <person name="Tosato V."/>
            <person name="Uchiyama S."/>
            <person name="Vandenbol M."/>
            <person name="Vannier F."/>
            <person name="Vassarotti A."/>
            <person name="Viari A."/>
            <person name="Wambutt R."/>
            <person name="Wedler E."/>
            <person name="Wedler H."/>
            <person name="Weitzenegger T."/>
            <person name="Winters P."/>
            <person name="Wipat A."/>
            <person name="Yamamoto H."/>
            <person name="Yamane K."/>
            <person name="Yasumoto K."/>
            <person name="Yata K."/>
            <person name="Yoshida K."/>
            <person name="Yoshikawa H.-F."/>
            <person name="Zumstein E."/>
            <person name="Yoshikawa H."/>
            <person name="Danchin A."/>
        </authorList>
    </citation>
    <scope>NUCLEOTIDE SEQUENCE [LARGE SCALE GENOMIC DNA]</scope>
    <source>
        <strain>168</strain>
    </source>
</reference>
<sequence length="353" mass="39600">MLQKPVQLLLWVAICLLVLLTVYVFFMLDMLWSPFWLVIKTIFIPLIISIFISYLLLPVTEWLHGKGLPRTLSILVIYVLFFGGIGWALYKGVPVLIVQLTDLSENIPMFAETYNGLLLHVHNHTDDWPDGMHHRIDKMIRQTEAFFAGTIEGAISGIRNVLDYFLIAATIPFLVFYMVKDIELMKKTVWYLTPKSWRKRGSAFLRDVDDSLGDYIRGQLLVCLILGVIAGISFWVFGLPYPLILGLISGVTNVIPYFGPFIGAVPALLIAMTISVKAVLVVVITVFILQFMEGNILSPFIVGRSLKMHPVVIMLALLAGGELAGIVGMILAVPATAVLKVMMIHFLRMRTEH</sequence>
<gene>
    <name type="primary">yrrI</name>
    <name type="ordered locus">BSU27420</name>
</gene>
<proteinExistence type="inferred from homology"/>
<feature type="chain" id="PRO_0000148307" description="Putative transport protein YrrI">
    <location>
        <begin position="1"/>
        <end position="353"/>
    </location>
</feature>
<feature type="transmembrane region" description="Helical" evidence="1">
    <location>
        <begin position="8"/>
        <end position="28"/>
    </location>
</feature>
<feature type="transmembrane region" description="Helical" evidence="1">
    <location>
        <begin position="37"/>
        <end position="57"/>
    </location>
</feature>
<feature type="transmembrane region" description="Helical" evidence="1">
    <location>
        <begin position="77"/>
        <end position="97"/>
    </location>
</feature>
<feature type="transmembrane region" description="Helical" evidence="1">
    <location>
        <begin position="165"/>
        <end position="185"/>
    </location>
</feature>
<feature type="transmembrane region" description="Helical" evidence="1">
    <location>
        <begin position="220"/>
        <end position="240"/>
    </location>
</feature>
<feature type="transmembrane region" description="Helical" evidence="1">
    <location>
        <begin position="243"/>
        <end position="263"/>
    </location>
</feature>
<feature type="transmembrane region" description="Helical" evidence="1">
    <location>
        <begin position="269"/>
        <end position="289"/>
    </location>
</feature>
<feature type="transmembrane region" description="Helical" evidence="1">
    <location>
        <begin position="311"/>
        <end position="331"/>
    </location>
</feature>
<organism>
    <name type="scientific">Bacillus subtilis (strain 168)</name>
    <dbReference type="NCBI Taxonomy" id="224308"/>
    <lineage>
        <taxon>Bacteria</taxon>
        <taxon>Bacillati</taxon>
        <taxon>Bacillota</taxon>
        <taxon>Bacilli</taxon>
        <taxon>Bacillales</taxon>
        <taxon>Bacillaceae</taxon>
        <taxon>Bacillus</taxon>
    </lineage>
</organism>
<dbReference type="EMBL" id="AL009126">
    <property type="protein sequence ID" value="CAB14683.1"/>
    <property type="molecule type" value="Genomic_DNA"/>
</dbReference>
<dbReference type="PIR" id="C69979">
    <property type="entry name" value="C69979"/>
</dbReference>
<dbReference type="RefSeq" id="NP_390619.1">
    <property type="nucleotide sequence ID" value="NC_000964.3"/>
</dbReference>
<dbReference type="RefSeq" id="WP_009967889.1">
    <property type="nucleotide sequence ID" value="NZ_OZ025638.1"/>
</dbReference>
<dbReference type="SMR" id="O34472"/>
<dbReference type="FunCoup" id="O34472">
    <property type="interactions" value="513"/>
</dbReference>
<dbReference type="STRING" id="224308.BSU27420"/>
<dbReference type="PaxDb" id="224308-BSU27420"/>
<dbReference type="DNASU" id="937557"/>
<dbReference type="EnsemblBacteria" id="CAB14683">
    <property type="protein sequence ID" value="CAB14683"/>
    <property type="gene ID" value="BSU_27420"/>
</dbReference>
<dbReference type="GeneID" id="937557"/>
<dbReference type="KEGG" id="bsu:BSU27420"/>
<dbReference type="PATRIC" id="fig|224308.179.peg.2978"/>
<dbReference type="eggNOG" id="COG0628">
    <property type="taxonomic scope" value="Bacteria"/>
</dbReference>
<dbReference type="InParanoid" id="O34472"/>
<dbReference type="OrthoDB" id="9793390at2"/>
<dbReference type="PhylomeDB" id="O34472"/>
<dbReference type="BioCyc" id="BSUB:BSU27420-MONOMER"/>
<dbReference type="Proteomes" id="UP000001570">
    <property type="component" value="Chromosome"/>
</dbReference>
<dbReference type="GO" id="GO:0005886">
    <property type="term" value="C:plasma membrane"/>
    <property type="evidence" value="ECO:0007669"/>
    <property type="project" value="UniProtKB-SubCell"/>
</dbReference>
<dbReference type="GO" id="GO:0055085">
    <property type="term" value="P:transmembrane transport"/>
    <property type="evidence" value="ECO:0000318"/>
    <property type="project" value="GO_Central"/>
</dbReference>
<dbReference type="InterPro" id="IPR002549">
    <property type="entry name" value="AI-2E-like"/>
</dbReference>
<dbReference type="PANTHER" id="PTHR21716">
    <property type="entry name" value="TRANSMEMBRANE PROTEIN"/>
    <property type="match status" value="1"/>
</dbReference>
<dbReference type="PANTHER" id="PTHR21716:SF15">
    <property type="entry name" value="TRANSPORT PROTEIN YRRI-RELATED"/>
    <property type="match status" value="1"/>
</dbReference>
<dbReference type="Pfam" id="PF01594">
    <property type="entry name" value="AI-2E_transport"/>
    <property type="match status" value="1"/>
</dbReference>
<keyword id="KW-1003">Cell membrane</keyword>
<keyword id="KW-0472">Membrane</keyword>
<keyword id="KW-1185">Reference proteome</keyword>
<keyword id="KW-0812">Transmembrane</keyword>
<keyword id="KW-1133">Transmembrane helix</keyword>
<keyword id="KW-0813">Transport</keyword>
<accession>O34472</accession>
<comment type="subcellular location">
    <subcellularLocation>
        <location evidence="2">Cell membrane</location>
        <topology evidence="2">Multi-pass membrane protein</topology>
    </subcellularLocation>
</comment>
<comment type="similarity">
    <text evidence="2">Belongs to the autoinducer-2 exporter (AI-2E) (TC 2.A.86) family.</text>
</comment>
<evidence type="ECO:0000255" key="1"/>
<evidence type="ECO:0000305" key="2"/>